<organism>
    <name type="scientific">Prochlorococcus marinus (strain AS9601)</name>
    <dbReference type="NCBI Taxonomy" id="146891"/>
    <lineage>
        <taxon>Bacteria</taxon>
        <taxon>Bacillati</taxon>
        <taxon>Cyanobacteriota</taxon>
        <taxon>Cyanophyceae</taxon>
        <taxon>Synechococcales</taxon>
        <taxon>Prochlorococcaceae</taxon>
        <taxon>Prochlorococcus</taxon>
    </lineage>
</organism>
<reference key="1">
    <citation type="journal article" date="2007" name="PLoS Genet.">
        <title>Patterns and implications of gene gain and loss in the evolution of Prochlorococcus.</title>
        <authorList>
            <person name="Kettler G.C."/>
            <person name="Martiny A.C."/>
            <person name="Huang K."/>
            <person name="Zucker J."/>
            <person name="Coleman M.L."/>
            <person name="Rodrigue S."/>
            <person name="Chen F."/>
            <person name="Lapidus A."/>
            <person name="Ferriera S."/>
            <person name="Johnson J."/>
            <person name="Steglich C."/>
            <person name="Church G.M."/>
            <person name="Richardson P."/>
            <person name="Chisholm S.W."/>
        </authorList>
    </citation>
    <scope>NUCLEOTIDE SEQUENCE [LARGE SCALE GENOMIC DNA]</scope>
    <source>
        <strain>AS9601</strain>
    </source>
</reference>
<proteinExistence type="inferred from homology"/>
<keyword id="KW-0028">Amino-acid biosynthesis</keyword>
<keyword id="KW-0963">Cytoplasm</keyword>
<keyword id="KW-0368">Histidine biosynthesis</keyword>
<keyword id="KW-0456">Lyase</keyword>
<feature type="chain" id="PRO_1000063115" description="Imidazole glycerol phosphate synthase subunit HisF">
    <location>
        <begin position="1"/>
        <end position="256"/>
    </location>
</feature>
<feature type="active site" evidence="1">
    <location>
        <position position="11"/>
    </location>
</feature>
<feature type="active site" evidence="1">
    <location>
        <position position="130"/>
    </location>
</feature>
<dbReference type="EC" id="4.3.2.10" evidence="1"/>
<dbReference type="EMBL" id="CP000551">
    <property type="protein sequence ID" value="ABM69773.1"/>
    <property type="molecule type" value="Genomic_DNA"/>
</dbReference>
<dbReference type="RefSeq" id="WP_011817941.1">
    <property type="nucleotide sequence ID" value="NC_008816.1"/>
</dbReference>
<dbReference type="SMR" id="A2BPR2"/>
<dbReference type="STRING" id="146891.A9601_04851"/>
<dbReference type="KEGG" id="pmb:A9601_04851"/>
<dbReference type="eggNOG" id="COG0107">
    <property type="taxonomic scope" value="Bacteria"/>
</dbReference>
<dbReference type="HOGENOM" id="CLU_048577_4_0_3"/>
<dbReference type="OrthoDB" id="9781903at2"/>
<dbReference type="UniPathway" id="UPA00031">
    <property type="reaction ID" value="UER00010"/>
</dbReference>
<dbReference type="Proteomes" id="UP000002590">
    <property type="component" value="Chromosome"/>
</dbReference>
<dbReference type="GO" id="GO:0005737">
    <property type="term" value="C:cytoplasm"/>
    <property type="evidence" value="ECO:0007669"/>
    <property type="project" value="UniProtKB-SubCell"/>
</dbReference>
<dbReference type="GO" id="GO:0000107">
    <property type="term" value="F:imidazoleglycerol-phosphate synthase activity"/>
    <property type="evidence" value="ECO:0007669"/>
    <property type="project" value="UniProtKB-UniRule"/>
</dbReference>
<dbReference type="GO" id="GO:0016829">
    <property type="term" value="F:lyase activity"/>
    <property type="evidence" value="ECO:0007669"/>
    <property type="project" value="UniProtKB-KW"/>
</dbReference>
<dbReference type="GO" id="GO:0000105">
    <property type="term" value="P:L-histidine biosynthetic process"/>
    <property type="evidence" value="ECO:0007669"/>
    <property type="project" value="UniProtKB-UniRule"/>
</dbReference>
<dbReference type="CDD" id="cd04731">
    <property type="entry name" value="HisF"/>
    <property type="match status" value="1"/>
</dbReference>
<dbReference type="FunFam" id="3.20.20.70:FF:000006">
    <property type="entry name" value="Imidazole glycerol phosphate synthase subunit HisF"/>
    <property type="match status" value="1"/>
</dbReference>
<dbReference type="Gene3D" id="3.20.20.70">
    <property type="entry name" value="Aldolase class I"/>
    <property type="match status" value="1"/>
</dbReference>
<dbReference type="HAMAP" id="MF_01013">
    <property type="entry name" value="HisF"/>
    <property type="match status" value="1"/>
</dbReference>
<dbReference type="InterPro" id="IPR013785">
    <property type="entry name" value="Aldolase_TIM"/>
</dbReference>
<dbReference type="InterPro" id="IPR006062">
    <property type="entry name" value="His_biosynth"/>
</dbReference>
<dbReference type="InterPro" id="IPR004651">
    <property type="entry name" value="HisF"/>
</dbReference>
<dbReference type="InterPro" id="IPR050064">
    <property type="entry name" value="IGPS_HisA/HisF"/>
</dbReference>
<dbReference type="InterPro" id="IPR011060">
    <property type="entry name" value="RibuloseP-bd_barrel"/>
</dbReference>
<dbReference type="NCBIfam" id="TIGR00735">
    <property type="entry name" value="hisF"/>
    <property type="match status" value="1"/>
</dbReference>
<dbReference type="PANTHER" id="PTHR21235:SF2">
    <property type="entry name" value="IMIDAZOLE GLYCEROL PHOSPHATE SYNTHASE HISHF"/>
    <property type="match status" value="1"/>
</dbReference>
<dbReference type="PANTHER" id="PTHR21235">
    <property type="entry name" value="IMIDAZOLE GLYCEROL PHOSPHATE SYNTHASE SUBUNIT HISF/H IGP SYNTHASE SUBUNIT HISF/H"/>
    <property type="match status" value="1"/>
</dbReference>
<dbReference type="Pfam" id="PF00977">
    <property type="entry name" value="His_biosynth"/>
    <property type="match status" value="1"/>
</dbReference>
<dbReference type="SUPFAM" id="SSF51366">
    <property type="entry name" value="Ribulose-phoshate binding barrel"/>
    <property type="match status" value="1"/>
</dbReference>
<sequence>MVALRLIPCLDVAHGRVVKGVNFVNLRDSGDPVELACRYSDEGADELVFLDIRASVENRNTLVDLVSRTAKSVKIPFTVGGGIDSVSSINDLLRAGADKVSLNSSAVRNPDLISKSSREFGNQCIVIAIDARRKVNKFGEWEVYVKGGRENTGIDVLSWAKKVEELGAGEILLTSMDGDGTQNGYDLNLTESVANIVDIPVIASGGAGSLEDIFDVFKEGRASAALLASLLHDKKLTLKEIKTFLLEKKLSIRPYE</sequence>
<accession>A2BPR2</accession>
<protein>
    <recommendedName>
        <fullName evidence="1">Imidazole glycerol phosphate synthase subunit HisF</fullName>
        <ecNumber evidence="1">4.3.2.10</ecNumber>
    </recommendedName>
    <alternativeName>
        <fullName evidence="1">IGP synthase cyclase subunit</fullName>
    </alternativeName>
    <alternativeName>
        <fullName evidence="1">IGP synthase subunit HisF</fullName>
    </alternativeName>
    <alternativeName>
        <fullName evidence="1">ImGP synthase subunit HisF</fullName>
        <shortName evidence="1">IGPS subunit HisF</shortName>
    </alternativeName>
</protein>
<comment type="function">
    <text evidence="1">IGPS catalyzes the conversion of PRFAR and glutamine to IGP, AICAR and glutamate. The HisF subunit catalyzes the cyclization activity that produces IGP and AICAR from PRFAR using the ammonia provided by the HisH subunit.</text>
</comment>
<comment type="catalytic activity">
    <reaction evidence="1">
        <text>5-[(5-phospho-1-deoxy-D-ribulos-1-ylimino)methylamino]-1-(5-phospho-beta-D-ribosyl)imidazole-4-carboxamide + L-glutamine = D-erythro-1-(imidazol-4-yl)glycerol 3-phosphate + 5-amino-1-(5-phospho-beta-D-ribosyl)imidazole-4-carboxamide + L-glutamate + H(+)</text>
        <dbReference type="Rhea" id="RHEA:24793"/>
        <dbReference type="ChEBI" id="CHEBI:15378"/>
        <dbReference type="ChEBI" id="CHEBI:29985"/>
        <dbReference type="ChEBI" id="CHEBI:58278"/>
        <dbReference type="ChEBI" id="CHEBI:58359"/>
        <dbReference type="ChEBI" id="CHEBI:58475"/>
        <dbReference type="ChEBI" id="CHEBI:58525"/>
        <dbReference type="EC" id="4.3.2.10"/>
    </reaction>
</comment>
<comment type="pathway">
    <text evidence="1">Amino-acid biosynthesis; L-histidine biosynthesis; L-histidine from 5-phospho-alpha-D-ribose 1-diphosphate: step 5/9.</text>
</comment>
<comment type="subunit">
    <text evidence="1">Heterodimer of HisH and HisF.</text>
</comment>
<comment type="subcellular location">
    <subcellularLocation>
        <location evidence="1">Cytoplasm</location>
    </subcellularLocation>
</comment>
<comment type="similarity">
    <text evidence="1">Belongs to the HisA/HisF family.</text>
</comment>
<evidence type="ECO:0000255" key="1">
    <source>
        <dbReference type="HAMAP-Rule" id="MF_01013"/>
    </source>
</evidence>
<gene>
    <name evidence="1" type="primary">hisF</name>
    <name type="ordered locus">A9601_04851</name>
</gene>
<name>HIS6_PROMS</name>